<gene>
    <name type="primary">Tfcp2</name>
    <name type="synonym">Tcfcp2</name>
</gene>
<feature type="chain" id="PRO_0000228002" description="Alpha-globin transcription factor CP2">
    <location>
        <begin position="1"/>
        <end position="502"/>
    </location>
</feature>
<feature type="domain" description="Grh/CP2 DB" evidence="3">
    <location>
        <begin position="63"/>
        <end position="300"/>
    </location>
</feature>
<feature type="region of interest" description="DNA-binding" evidence="1">
    <location>
        <begin position="133"/>
        <end position="386"/>
    </location>
</feature>
<feature type="region of interest" description="Disordered" evidence="4">
    <location>
        <begin position="241"/>
        <end position="268"/>
    </location>
</feature>
<feature type="region of interest" description="Disordered" evidence="4">
    <location>
        <begin position="294"/>
        <end position="326"/>
    </location>
</feature>
<feature type="compositionally biased region" description="Basic and acidic residues" evidence="4">
    <location>
        <begin position="241"/>
        <end position="265"/>
    </location>
</feature>
<feature type="modified residue" description="Phosphoserine" evidence="2">
    <location>
        <position position="353"/>
    </location>
</feature>
<feature type="splice variant" id="VSP_017649" description="In isoform 3." evidence="5">
    <location>
        <begin position="354"/>
        <end position="355"/>
    </location>
</feature>
<feature type="splice variant" id="VSP_017650" description="In isoform 2." evidence="6">
    <original>MVQNFQEEACFILDTMEAETSDSYHVILK</original>
    <variation>VVLSCLILPGTELWSSGRTAGTLNCLALPFL</variation>
    <location>
        <begin position="474"/>
        <end position="502"/>
    </location>
</feature>
<name>TFCP2_MOUSE</name>
<sequence>MAWALKLPLADEVIESGLVQDFDASLSGIGQELGAGAYSMSDVLALPIFKQEESSLPPDNENEILPFQYVLCAATSPAVKLHDETLTYLNQGQSYEIRMLDNRKLGELPELNGKLVKSIFRVVFHDRRLQYTEHQQLEGWRWNRPGDRILDIDIPMSVGVIDPRANPTQLNTVEFLWDPSKRTSVFIQVHCISTEFTMRKHGGEKGVPFRVQIDTFKENGNGEYTEHLHSASCQIKVFKPKGADRKQKIDREKMEKRTPHEKEKYQPSYETTILTECSPWPEITYVNNSPSPGFNSSHSSFSLGEGNGSPNHQPEPPPPVTDNLLPTTTPQEAQQWLHRNRFSTFTRLFTNFSGADLLKLTRDDVIQICGPADGIRLFNALKGRMVRPRLTIYVCQESLQLREQQPQPQPQPQKQEDGDSNGTFFVYHAIYLEELTAVELTEKIAQLFSISPHQISQIYKQGPTGIHVVISDEMVQNFQEEACFILDTMEAETSDSYHVILK</sequence>
<proteinExistence type="evidence at protein level"/>
<comment type="function">
    <text evidence="1">Binds a variety of cellular promoters including fibrinogen, alpha-globin promoters. Activation of the alpha-globin promoter in erythroid cells is via synergistic interaction with UBP1 (By similarity). Functions as part of the SSP (stage selector protein) complex. Facilitates the interaction of the gamma-globin genes with enhancer elements contained in the locus control region in fetal erythroid cells. Interacts by binding to the stage selector element (SSE) in the proximal gamma-globin promoter (By similarity).</text>
</comment>
<comment type="subunit">
    <text evidence="1">Binds to DNA as a dimer. Interacts with UBP1 and PIAS1, and is probably part of a complex containing TFCP2, UBP1 and PIAS1. Component of the SSP (stage selector protein) complex, which appears to be a heteromer of TFCP2 and 2 copies of NFE4 (By similarity).</text>
</comment>
<comment type="subcellular location">
    <subcellularLocation>
        <location evidence="1">Nucleus</location>
    </subcellularLocation>
</comment>
<comment type="alternative products">
    <event type="alternative splicing"/>
    <isoform>
        <id>Q9ERA0-1</id>
        <name>1</name>
        <sequence type="displayed"/>
    </isoform>
    <isoform>
        <id>Q9ERA0-2</id>
        <name>2</name>
        <sequence type="described" ref="VSP_017650"/>
    </isoform>
    <isoform>
        <id>Q9ERA0-3</id>
        <name>3</name>
        <sequence type="described" ref="VSP_017649"/>
    </isoform>
</comment>
<comment type="similarity">
    <text evidence="7">Belongs to the grh/CP2 family. CP2 subfamily.</text>
</comment>
<reference key="1">
    <citation type="journal article" date="1992" name="Mol. Cell. Biol.">
        <title>Molecular cloning of the alpha-globin transcription factor CP2.</title>
        <authorList>
            <person name="Lim L.C."/>
            <person name="Swendeman S.L."/>
            <person name="Sheffery M."/>
        </authorList>
    </citation>
    <scope>NUCLEOTIDE SEQUENCE [MRNA] (ISOFORM 1)</scope>
</reference>
<reference key="2">
    <citation type="journal article" date="2005" name="Science">
        <title>The transcriptional landscape of the mammalian genome.</title>
        <authorList>
            <person name="Carninci P."/>
            <person name="Kasukawa T."/>
            <person name="Katayama S."/>
            <person name="Gough J."/>
            <person name="Frith M.C."/>
            <person name="Maeda N."/>
            <person name="Oyama R."/>
            <person name="Ravasi T."/>
            <person name="Lenhard B."/>
            <person name="Wells C."/>
            <person name="Kodzius R."/>
            <person name="Shimokawa K."/>
            <person name="Bajic V.B."/>
            <person name="Brenner S.E."/>
            <person name="Batalov S."/>
            <person name="Forrest A.R."/>
            <person name="Zavolan M."/>
            <person name="Davis M.J."/>
            <person name="Wilming L.G."/>
            <person name="Aidinis V."/>
            <person name="Allen J.E."/>
            <person name="Ambesi-Impiombato A."/>
            <person name="Apweiler R."/>
            <person name="Aturaliya R.N."/>
            <person name="Bailey T.L."/>
            <person name="Bansal M."/>
            <person name="Baxter L."/>
            <person name="Beisel K.W."/>
            <person name="Bersano T."/>
            <person name="Bono H."/>
            <person name="Chalk A.M."/>
            <person name="Chiu K.P."/>
            <person name="Choudhary V."/>
            <person name="Christoffels A."/>
            <person name="Clutterbuck D.R."/>
            <person name="Crowe M.L."/>
            <person name="Dalla E."/>
            <person name="Dalrymple B.P."/>
            <person name="de Bono B."/>
            <person name="Della Gatta G."/>
            <person name="di Bernardo D."/>
            <person name="Down T."/>
            <person name="Engstrom P."/>
            <person name="Fagiolini M."/>
            <person name="Faulkner G."/>
            <person name="Fletcher C.F."/>
            <person name="Fukushima T."/>
            <person name="Furuno M."/>
            <person name="Futaki S."/>
            <person name="Gariboldi M."/>
            <person name="Georgii-Hemming P."/>
            <person name="Gingeras T.R."/>
            <person name="Gojobori T."/>
            <person name="Green R.E."/>
            <person name="Gustincich S."/>
            <person name="Harbers M."/>
            <person name="Hayashi Y."/>
            <person name="Hensch T.K."/>
            <person name="Hirokawa N."/>
            <person name="Hill D."/>
            <person name="Huminiecki L."/>
            <person name="Iacono M."/>
            <person name="Ikeo K."/>
            <person name="Iwama A."/>
            <person name="Ishikawa T."/>
            <person name="Jakt M."/>
            <person name="Kanapin A."/>
            <person name="Katoh M."/>
            <person name="Kawasawa Y."/>
            <person name="Kelso J."/>
            <person name="Kitamura H."/>
            <person name="Kitano H."/>
            <person name="Kollias G."/>
            <person name="Krishnan S.P."/>
            <person name="Kruger A."/>
            <person name="Kummerfeld S.K."/>
            <person name="Kurochkin I.V."/>
            <person name="Lareau L.F."/>
            <person name="Lazarevic D."/>
            <person name="Lipovich L."/>
            <person name="Liu J."/>
            <person name="Liuni S."/>
            <person name="McWilliam S."/>
            <person name="Madan Babu M."/>
            <person name="Madera M."/>
            <person name="Marchionni L."/>
            <person name="Matsuda H."/>
            <person name="Matsuzawa S."/>
            <person name="Miki H."/>
            <person name="Mignone F."/>
            <person name="Miyake S."/>
            <person name="Morris K."/>
            <person name="Mottagui-Tabar S."/>
            <person name="Mulder N."/>
            <person name="Nakano N."/>
            <person name="Nakauchi H."/>
            <person name="Ng P."/>
            <person name="Nilsson R."/>
            <person name="Nishiguchi S."/>
            <person name="Nishikawa S."/>
            <person name="Nori F."/>
            <person name="Ohara O."/>
            <person name="Okazaki Y."/>
            <person name="Orlando V."/>
            <person name="Pang K.C."/>
            <person name="Pavan W.J."/>
            <person name="Pavesi G."/>
            <person name="Pesole G."/>
            <person name="Petrovsky N."/>
            <person name="Piazza S."/>
            <person name="Reed J."/>
            <person name="Reid J.F."/>
            <person name="Ring B.Z."/>
            <person name="Ringwald M."/>
            <person name="Rost B."/>
            <person name="Ruan Y."/>
            <person name="Salzberg S.L."/>
            <person name="Sandelin A."/>
            <person name="Schneider C."/>
            <person name="Schoenbach C."/>
            <person name="Sekiguchi K."/>
            <person name="Semple C.A."/>
            <person name="Seno S."/>
            <person name="Sessa L."/>
            <person name="Sheng Y."/>
            <person name="Shibata Y."/>
            <person name="Shimada H."/>
            <person name="Shimada K."/>
            <person name="Silva D."/>
            <person name="Sinclair B."/>
            <person name="Sperling S."/>
            <person name="Stupka E."/>
            <person name="Sugiura K."/>
            <person name="Sultana R."/>
            <person name="Takenaka Y."/>
            <person name="Taki K."/>
            <person name="Tammoja K."/>
            <person name="Tan S.L."/>
            <person name="Tang S."/>
            <person name="Taylor M.S."/>
            <person name="Tegner J."/>
            <person name="Teichmann S.A."/>
            <person name="Ueda H.R."/>
            <person name="van Nimwegen E."/>
            <person name="Verardo R."/>
            <person name="Wei C.L."/>
            <person name="Yagi K."/>
            <person name="Yamanishi H."/>
            <person name="Zabarovsky E."/>
            <person name="Zhu S."/>
            <person name="Zimmer A."/>
            <person name="Hide W."/>
            <person name="Bult C."/>
            <person name="Grimmond S.M."/>
            <person name="Teasdale R.D."/>
            <person name="Liu E.T."/>
            <person name="Brusic V."/>
            <person name="Quackenbush J."/>
            <person name="Wahlestedt C."/>
            <person name="Mattick J.S."/>
            <person name="Hume D.A."/>
            <person name="Kai C."/>
            <person name="Sasaki D."/>
            <person name="Tomaru Y."/>
            <person name="Fukuda S."/>
            <person name="Kanamori-Katayama M."/>
            <person name="Suzuki M."/>
            <person name="Aoki J."/>
            <person name="Arakawa T."/>
            <person name="Iida J."/>
            <person name="Imamura K."/>
            <person name="Itoh M."/>
            <person name="Kato T."/>
            <person name="Kawaji H."/>
            <person name="Kawagashira N."/>
            <person name="Kawashima T."/>
            <person name="Kojima M."/>
            <person name="Kondo S."/>
            <person name="Konno H."/>
            <person name="Nakano K."/>
            <person name="Ninomiya N."/>
            <person name="Nishio T."/>
            <person name="Okada M."/>
            <person name="Plessy C."/>
            <person name="Shibata K."/>
            <person name="Shiraki T."/>
            <person name="Suzuki S."/>
            <person name="Tagami M."/>
            <person name="Waki K."/>
            <person name="Watahiki A."/>
            <person name="Okamura-Oho Y."/>
            <person name="Suzuki H."/>
            <person name="Kawai J."/>
            <person name="Hayashizaki Y."/>
        </authorList>
    </citation>
    <scope>NUCLEOTIDE SEQUENCE [LARGE SCALE MRNA] (ISOFORMS 1 AND 2)</scope>
    <source>
        <strain>C57BL/6J</strain>
        <tissue>Heart</tissue>
        <tissue>Melanocyte</tissue>
        <tissue>Visual cortex</tissue>
    </source>
</reference>
<reference key="3">
    <citation type="journal article" date="2004" name="Genome Res.">
        <title>The status, quality, and expansion of the NIH full-length cDNA project: the Mammalian Gene Collection (MGC).</title>
        <authorList>
            <consortium name="The MGC Project Team"/>
        </authorList>
    </citation>
    <scope>NUCLEOTIDE SEQUENCE [LARGE SCALE MRNA] (ISOFORM 3)</scope>
    <source>
        <strain>FVB/N</strain>
        <tissue>Liver</tissue>
    </source>
</reference>
<reference key="4">
    <citation type="journal article" date="2005" name="Mol. Cell. Biol.">
        <title>Erythroid cell-specific alpha-globin gene regulation by the CP2 transcription factor family.</title>
        <authorList>
            <person name="Kang H.C."/>
            <person name="Chae J.H."/>
            <person name="Lee Y.H."/>
            <person name="Park M.-A."/>
            <person name="Shin J.H."/>
            <person name="Kim S.-H."/>
            <person name="Ye S.-K."/>
            <person name="Cho Y.S."/>
            <person name="Fiering S."/>
            <person name="Kim C.G."/>
        </authorList>
    </citation>
    <scope>INTERACTION WITH UBP1 AND PIAS1</scope>
    <source>
        <strain>DBA/2J</strain>
        <tissue>Erythroleukemia</tissue>
    </source>
</reference>
<reference key="5">
    <citation type="journal article" date="2010" name="Cell">
        <title>A tissue-specific atlas of mouse protein phosphorylation and expression.</title>
        <authorList>
            <person name="Huttlin E.L."/>
            <person name="Jedrychowski M.P."/>
            <person name="Elias J.E."/>
            <person name="Goswami T."/>
            <person name="Rad R."/>
            <person name="Beausoleil S.A."/>
            <person name="Villen J."/>
            <person name="Haas W."/>
            <person name="Sowa M.E."/>
            <person name="Gygi S.P."/>
        </authorList>
    </citation>
    <scope>IDENTIFICATION BY MASS SPECTROMETRY [LARGE SCALE ANALYSIS]</scope>
    <source>
        <tissue>Kidney</tissue>
    </source>
</reference>
<organism>
    <name type="scientific">Mus musculus</name>
    <name type="common">Mouse</name>
    <dbReference type="NCBI Taxonomy" id="10090"/>
    <lineage>
        <taxon>Eukaryota</taxon>
        <taxon>Metazoa</taxon>
        <taxon>Chordata</taxon>
        <taxon>Craniata</taxon>
        <taxon>Vertebrata</taxon>
        <taxon>Euteleostomi</taxon>
        <taxon>Mammalia</taxon>
        <taxon>Eutheria</taxon>
        <taxon>Euarchontoglires</taxon>
        <taxon>Glires</taxon>
        <taxon>Rodentia</taxon>
        <taxon>Myomorpha</taxon>
        <taxon>Muroidea</taxon>
        <taxon>Muridae</taxon>
        <taxon>Murinae</taxon>
        <taxon>Mus</taxon>
        <taxon>Mus</taxon>
    </lineage>
</organism>
<accession>Q9ERA0</accession>
<accession>Q3UGJ4</accession>
<accession>Q8VC13</accession>
<keyword id="KW-0025">Alternative splicing</keyword>
<keyword id="KW-0238">DNA-binding</keyword>
<keyword id="KW-0539">Nucleus</keyword>
<keyword id="KW-0597">Phosphoprotein</keyword>
<keyword id="KW-1185">Reference proteome</keyword>
<keyword id="KW-0804">Transcription</keyword>
<keyword id="KW-0805">Transcription regulation</keyword>
<protein>
    <recommendedName>
        <fullName>Alpha-globin transcription factor CP2</fullName>
    </recommendedName>
</protein>
<dbReference type="EMBL" id="M84809">
    <property type="protein sequence ID" value="AAF99390.1"/>
    <property type="molecule type" value="mRNA"/>
</dbReference>
<dbReference type="EMBL" id="AK146503">
    <property type="protein sequence ID" value="BAE27218.1"/>
    <property type="molecule type" value="mRNA"/>
</dbReference>
<dbReference type="EMBL" id="AK147898">
    <property type="protein sequence ID" value="BAE28214.1"/>
    <property type="molecule type" value="mRNA"/>
</dbReference>
<dbReference type="EMBL" id="AK158682">
    <property type="protein sequence ID" value="BAE34609.1"/>
    <property type="molecule type" value="mRNA"/>
</dbReference>
<dbReference type="EMBL" id="BC022131">
    <property type="protein sequence ID" value="AAH22131.1"/>
    <property type="molecule type" value="mRNA"/>
</dbReference>
<dbReference type="CCDS" id="CCDS27840.1">
    <molecule id="Q9ERA0-1"/>
</dbReference>
<dbReference type="CCDS" id="CCDS88846.1">
    <molecule id="Q9ERA0-3"/>
</dbReference>
<dbReference type="PIR" id="B42030">
    <property type="entry name" value="B42030"/>
</dbReference>
<dbReference type="RefSeq" id="NP_001276532.1">
    <molecule id="Q9ERA0-3"/>
    <property type="nucleotide sequence ID" value="NM_001289603.1"/>
</dbReference>
<dbReference type="RefSeq" id="NP_258437.1">
    <molecule id="Q9ERA0-1"/>
    <property type="nucleotide sequence ID" value="NM_033476.3"/>
</dbReference>
<dbReference type="RefSeq" id="XP_036015202.1">
    <molecule id="Q9ERA0-1"/>
    <property type="nucleotide sequence ID" value="XM_036159309.1"/>
</dbReference>
<dbReference type="SMR" id="Q9ERA0"/>
<dbReference type="BioGRID" id="204014">
    <property type="interactions" value="9"/>
</dbReference>
<dbReference type="FunCoup" id="Q9ERA0">
    <property type="interactions" value="3246"/>
</dbReference>
<dbReference type="IntAct" id="Q9ERA0">
    <property type="interactions" value="3"/>
</dbReference>
<dbReference type="STRING" id="10090.ENSMUSP00000155683"/>
<dbReference type="iPTMnet" id="Q9ERA0"/>
<dbReference type="PhosphoSitePlus" id="Q9ERA0"/>
<dbReference type="PaxDb" id="10090-ENSMUSP00000009877"/>
<dbReference type="PeptideAtlas" id="Q9ERA0"/>
<dbReference type="ProteomicsDB" id="262883">
    <molecule id="Q9ERA0-1"/>
</dbReference>
<dbReference type="ProteomicsDB" id="262884">
    <molecule id="Q9ERA0-2"/>
</dbReference>
<dbReference type="ProteomicsDB" id="262885">
    <molecule id="Q9ERA0-3"/>
</dbReference>
<dbReference type="Pumba" id="Q9ERA0"/>
<dbReference type="Antibodypedia" id="26338">
    <property type="antibodies" value="208 antibodies from 31 providers"/>
</dbReference>
<dbReference type="DNASU" id="21422"/>
<dbReference type="Ensembl" id="ENSMUST00000009877.8">
    <molecule id="Q9ERA0-3"/>
    <property type="protein sequence ID" value="ENSMUSP00000009877.8"/>
    <property type="gene ID" value="ENSMUSG00000009733.10"/>
</dbReference>
<dbReference type="Ensembl" id="ENSMUST00000229696.2">
    <molecule id="Q9ERA0-1"/>
    <property type="protein sequence ID" value="ENSMUSP00000155683.2"/>
    <property type="gene ID" value="ENSMUSG00000009733.10"/>
</dbReference>
<dbReference type="GeneID" id="21422"/>
<dbReference type="KEGG" id="mmu:21422"/>
<dbReference type="UCSC" id="uc007xrl.2">
    <molecule id="Q9ERA0-1"/>
    <property type="organism name" value="mouse"/>
</dbReference>
<dbReference type="UCSC" id="uc007xrm.1">
    <molecule id="Q9ERA0-2"/>
    <property type="organism name" value="mouse"/>
</dbReference>
<dbReference type="UCSC" id="uc011zzo.2">
    <molecule id="Q9ERA0-3"/>
    <property type="organism name" value="mouse"/>
</dbReference>
<dbReference type="AGR" id="MGI:98509"/>
<dbReference type="CTD" id="7024"/>
<dbReference type="MGI" id="MGI:98509">
    <property type="gene designation" value="Tfcp2"/>
</dbReference>
<dbReference type="VEuPathDB" id="HostDB:ENSMUSG00000009733"/>
<dbReference type="eggNOG" id="KOG4091">
    <property type="taxonomic scope" value="Eukaryota"/>
</dbReference>
<dbReference type="GeneTree" id="ENSGT00940000157629"/>
<dbReference type="HOGENOM" id="CLU_015127_2_0_1"/>
<dbReference type="InParanoid" id="Q9ERA0"/>
<dbReference type="OMA" id="XNLLPTT"/>
<dbReference type="PhylomeDB" id="Q9ERA0"/>
<dbReference type="TreeFam" id="TF314132"/>
<dbReference type="BioGRID-ORCS" id="21422">
    <property type="hits" value="2 hits in 76 CRISPR screens"/>
</dbReference>
<dbReference type="ChiTaRS" id="Tfcp2">
    <property type="organism name" value="mouse"/>
</dbReference>
<dbReference type="PRO" id="PR:Q9ERA0"/>
<dbReference type="Proteomes" id="UP000000589">
    <property type="component" value="Chromosome 15"/>
</dbReference>
<dbReference type="RNAct" id="Q9ERA0">
    <property type="molecule type" value="protein"/>
</dbReference>
<dbReference type="Bgee" id="ENSMUSG00000009733">
    <property type="expression patterns" value="Expressed in embryonic brain and 251 other cell types or tissues"/>
</dbReference>
<dbReference type="ExpressionAtlas" id="Q9ERA0">
    <property type="expression patterns" value="baseline and differential"/>
</dbReference>
<dbReference type="GO" id="GO:0005829">
    <property type="term" value="C:cytosol"/>
    <property type="evidence" value="ECO:0007669"/>
    <property type="project" value="Ensembl"/>
</dbReference>
<dbReference type="GO" id="GO:0005654">
    <property type="term" value="C:nucleoplasm"/>
    <property type="evidence" value="ECO:0007669"/>
    <property type="project" value="Ensembl"/>
</dbReference>
<dbReference type="GO" id="GO:0005667">
    <property type="term" value="C:transcription regulator complex"/>
    <property type="evidence" value="ECO:0000304"/>
    <property type="project" value="MGI"/>
</dbReference>
<dbReference type="GO" id="GO:0001228">
    <property type="term" value="F:DNA-binding transcription activator activity, RNA polymerase II-specific"/>
    <property type="evidence" value="ECO:0000314"/>
    <property type="project" value="NTNU_SB"/>
</dbReference>
<dbReference type="GO" id="GO:0000978">
    <property type="term" value="F:RNA polymerase II cis-regulatory region sequence-specific DNA binding"/>
    <property type="evidence" value="ECO:0000314"/>
    <property type="project" value="NTNU_SB"/>
</dbReference>
<dbReference type="GO" id="GO:0042789">
    <property type="term" value="P:mRNA transcription by RNA polymerase II"/>
    <property type="evidence" value="ECO:0007669"/>
    <property type="project" value="Ensembl"/>
</dbReference>
<dbReference type="GO" id="GO:0045893">
    <property type="term" value="P:positive regulation of DNA-templated transcription"/>
    <property type="evidence" value="ECO:0000304"/>
    <property type="project" value="MGI"/>
</dbReference>
<dbReference type="GO" id="GO:0045944">
    <property type="term" value="P:positive regulation of transcription by RNA polymerase II"/>
    <property type="evidence" value="ECO:0000314"/>
    <property type="project" value="NTNU_SB"/>
</dbReference>
<dbReference type="CDD" id="cd09589">
    <property type="entry name" value="SAM_TFCP2"/>
    <property type="match status" value="1"/>
</dbReference>
<dbReference type="FunFam" id="1.10.150.50:FF:000022">
    <property type="entry name" value="Transcription factor CP2 like 1"/>
    <property type="match status" value="1"/>
</dbReference>
<dbReference type="Gene3D" id="1.10.150.50">
    <property type="entry name" value="Transcription Factor, Ets-1"/>
    <property type="match status" value="1"/>
</dbReference>
<dbReference type="InterPro" id="IPR007604">
    <property type="entry name" value="CP2"/>
</dbReference>
<dbReference type="InterPro" id="IPR013761">
    <property type="entry name" value="SAM/pointed_sf"/>
</dbReference>
<dbReference type="InterPro" id="IPR041418">
    <property type="entry name" value="SAM_3"/>
</dbReference>
<dbReference type="InterPro" id="IPR040167">
    <property type="entry name" value="TF_CP2-like"/>
</dbReference>
<dbReference type="InterPro" id="IPR037599">
    <property type="entry name" value="TFCP2_SAM"/>
</dbReference>
<dbReference type="PANTHER" id="PTHR11037:SF11">
    <property type="entry name" value="ALPHA-GLOBIN TRANSCRIPTION FACTOR CP2"/>
    <property type="match status" value="1"/>
</dbReference>
<dbReference type="PANTHER" id="PTHR11037">
    <property type="entry name" value="TRANSCRIPTION FACTOR CP2"/>
    <property type="match status" value="1"/>
</dbReference>
<dbReference type="Pfam" id="PF04516">
    <property type="entry name" value="CP2"/>
    <property type="match status" value="1"/>
</dbReference>
<dbReference type="Pfam" id="PF25416">
    <property type="entry name" value="GRHL1_C"/>
    <property type="match status" value="1"/>
</dbReference>
<dbReference type="Pfam" id="PF18016">
    <property type="entry name" value="SAM_3"/>
    <property type="match status" value="1"/>
</dbReference>
<dbReference type="SUPFAM" id="SSF47769">
    <property type="entry name" value="SAM/Pointed domain"/>
    <property type="match status" value="1"/>
</dbReference>
<dbReference type="PROSITE" id="PS51968">
    <property type="entry name" value="GRH_CP2_DB"/>
    <property type="match status" value="1"/>
</dbReference>
<evidence type="ECO:0000250" key="1"/>
<evidence type="ECO:0000250" key="2">
    <source>
        <dbReference type="UniProtKB" id="Q12800"/>
    </source>
</evidence>
<evidence type="ECO:0000255" key="3">
    <source>
        <dbReference type="PROSITE-ProRule" id="PRU01313"/>
    </source>
</evidence>
<evidence type="ECO:0000256" key="4">
    <source>
        <dbReference type="SAM" id="MobiDB-lite"/>
    </source>
</evidence>
<evidence type="ECO:0000303" key="5">
    <source>
    </source>
</evidence>
<evidence type="ECO:0000303" key="6">
    <source>
    </source>
</evidence>
<evidence type="ECO:0000305" key="7"/>